<dbReference type="EMBL" id="CP000946">
    <property type="protein sequence ID" value="ACA79708.1"/>
    <property type="molecule type" value="Genomic_DNA"/>
</dbReference>
<dbReference type="RefSeq" id="WP_000063515.1">
    <property type="nucleotide sequence ID" value="NC_010468.1"/>
</dbReference>
<dbReference type="KEGG" id="ecl:EcolC_4110"/>
<dbReference type="HOGENOM" id="CLU_066437_0_0_6"/>
<dbReference type="GO" id="GO:0005886">
    <property type="term" value="C:plasma membrane"/>
    <property type="evidence" value="ECO:0007669"/>
    <property type="project" value="UniProtKB-SubCell"/>
</dbReference>
<dbReference type="GO" id="GO:0015153">
    <property type="term" value="F:rhamnose transmembrane transporter activity"/>
    <property type="evidence" value="ECO:0007669"/>
    <property type="project" value="UniProtKB-UniRule"/>
</dbReference>
<dbReference type="GO" id="GO:0015293">
    <property type="term" value="F:symporter activity"/>
    <property type="evidence" value="ECO:0007669"/>
    <property type="project" value="UniProtKB-KW"/>
</dbReference>
<dbReference type="HAMAP" id="MF_01532">
    <property type="entry name" value="RhaT"/>
    <property type="match status" value="1"/>
</dbReference>
<dbReference type="InterPro" id="IPR004673">
    <property type="entry name" value="L-rhamnose-proton_sym_RhaT"/>
</dbReference>
<dbReference type="NCBIfam" id="NF010021">
    <property type="entry name" value="PRK13499.1-1"/>
    <property type="match status" value="1"/>
</dbReference>
<dbReference type="NCBIfam" id="NF010023">
    <property type="entry name" value="PRK13499.1-3"/>
    <property type="match status" value="1"/>
</dbReference>
<dbReference type="NCBIfam" id="TIGR00776">
    <property type="entry name" value="RhaT"/>
    <property type="match status" value="1"/>
</dbReference>
<dbReference type="Pfam" id="PF06379">
    <property type="entry name" value="RhaT"/>
    <property type="match status" value="1"/>
</dbReference>
<gene>
    <name evidence="1" type="primary">rhaT</name>
    <name type="ordered locus">EcolC_4110</name>
</gene>
<protein>
    <recommendedName>
        <fullName evidence="1">L-rhamnose-proton symporter</fullName>
    </recommendedName>
    <alternativeName>
        <fullName evidence="1">L-rhamnose-H(+) transport protein</fullName>
    </alternativeName>
</protein>
<proteinExistence type="inferred from homology"/>
<accession>B1IVH1</accession>
<reference key="1">
    <citation type="submission" date="2008-02" db="EMBL/GenBank/DDBJ databases">
        <title>Complete sequence of Escherichia coli C str. ATCC 8739.</title>
        <authorList>
            <person name="Copeland A."/>
            <person name="Lucas S."/>
            <person name="Lapidus A."/>
            <person name="Glavina del Rio T."/>
            <person name="Dalin E."/>
            <person name="Tice H."/>
            <person name="Bruce D."/>
            <person name="Goodwin L."/>
            <person name="Pitluck S."/>
            <person name="Kiss H."/>
            <person name="Brettin T."/>
            <person name="Detter J.C."/>
            <person name="Han C."/>
            <person name="Kuske C.R."/>
            <person name="Schmutz J."/>
            <person name="Larimer F."/>
            <person name="Land M."/>
            <person name="Hauser L."/>
            <person name="Kyrpides N."/>
            <person name="Mikhailova N."/>
            <person name="Ingram L."/>
            <person name="Richardson P."/>
        </authorList>
    </citation>
    <scope>NUCLEOTIDE SEQUENCE [LARGE SCALE GENOMIC DNA]</scope>
    <source>
        <strain>ATCC 8739 / DSM 1576 / NBRC 3972 / NCIMB 8545 / WDCM 00012 / Crooks</strain>
    </source>
</reference>
<name>RHAT_ECOLC</name>
<keyword id="KW-0997">Cell inner membrane</keyword>
<keyword id="KW-1003">Cell membrane</keyword>
<keyword id="KW-0472">Membrane</keyword>
<keyword id="KW-0762">Sugar transport</keyword>
<keyword id="KW-0769">Symport</keyword>
<keyword id="KW-0812">Transmembrane</keyword>
<keyword id="KW-1133">Transmembrane helix</keyword>
<keyword id="KW-0813">Transport</keyword>
<comment type="function">
    <text evidence="1">Uptake of L-rhamnose across the cytoplasmic membrane with the concomitant transport of protons into the cell (symport system).</text>
</comment>
<comment type="catalytic activity">
    <reaction evidence="1">
        <text>L-rhamnopyranose(in) + H(+)(in) = L-rhamnopyranose(out) + H(+)(out)</text>
        <dbReference type="Rhea" id="RHEA:29947"/>
        <dbReference type="ChEBI" id="CHEBI:15378"/>
        <dbReference type="ChEBI" id="CHEBI:62346"/>
    </reaction>
    <physiologicalReaction direction="right-to-left" evidence="1">
        <dbReference type="Rhea" id="RHEA:29949"/>
    </physiologicalReaction>
</comment>
<comment type="subcellular location">
    <subcellularLocation>
        <location evidence="1">Cell inner membrane</location>
        <topology evidence="1">Multi-pass membrane protein</topology>
    </subcellularLocation>
</comment>
<comment type="similarity">
    <text evidence="1">Belongs to the L-rhamnose transporter (TC 2.A.7.6) family.</text>
</comment>
<evidence type="ECO:0000255" key="1">
    <source>
        <dbReference type="HAMAP-Rule" id="MF_01532"/>
    </source>
</evidence>
<sequence>MSNAITMGIFWHLIGAASAACFYAPFKKVKKWSWETMWSVGGIVSWIILPWAISALLLPNFWAYYSSFSLSTLLPVFLFGAMWGIGNINYGLTMRYLGMSMGIGIAIGITLIVGTLMTPIINGNFDVLISTEGGRMTLLGVLVALIGVGIVTRAGQLKERKMGIKAEEFNLKKGLVLAVMCGIFSAGMSFAMNAAKPMHEAAAALGVDPLYVALPSYVVIMGGGAIINLGFCFIRLAKVKDLSLKADFSLAKSLIIHNVLLSTLGGLMWYLQFFFYAWGHAPIPAQYDYISWMLHMSFYVLCGGIVGLVLKEWNNAGRRPVTVLSLGCVVIIVAANIVGIGMAN</sequence>
<organism>
    <name type="scientific">Escherichia coli (strain ATCC 8739 / DSM 1576 / NBRC 3972 / NCIMB 8545 / WDCM 00012 / Crooks)</name>
    <dbReference type="NCBI Taxonomy" id="481805"/>
    <lineage>
        <taxon>Bacteria</taxon>
        <taxon>Pseudomonadati</taxon>
        <taxon>Pseudomonadota</taxon>
        <taxon>Gammaproteobacteria</taxon>
        <taxon>Enterobacterales</taxon>
        <taxon>Enterobacteriaceae</taxon>
        <taxon>Escherichia</taxon>
    </lineage>
</organism>
<feature type="chain" id="PRO_1000087594" description="L-rhamnose-proton symporter">
    <location>
        <begin position="1"/>
        <end position="344"/>
    </location>
</feature>
<feature type="transmembrane region" description="Helical" evidence="1">
    <location>
        <begin position="4"/>
        <end position="24"/>
    </location>
</feature>
<feature type="transmembrane region" description="Helical" evidence="1">
    <location>
        <begin position="38"/>
        <end position="58"/>
    </location>
</feature>
<feature type="transmembrane region" description="Helical" evidence="1">
    <location>
        <begin position="68"/>
        <end position="88"/>
    </location>
</feature>
<feature type="transmembrane region" description="Helical" evidence="1">
    <location>
        <begin position="101"/>
        <end position="121"/>
    </location>
</feature>
<feature type="transmembrane region" description="Helical" evidence="1">
    <location>
        <begin position="137"/>
        <end position="157"/>
    </location>
</feature>
<feature type="transmembrane region" description="Helical" evidence="1">
    <location>
        <begin position="175"/>
        <end position="195"/>
    </location>
</feature>
<feature type="transmembrane region" description="Helical" evidence="1">
    <location>
        <begin position="214"/>
        <end position="234"/>
    </location>
</feature>
<feature type="transmembrane region" description="Helical" evidence="1">
    <location>
        <begin position="259"/>
        <end position="279"/>
    </location>
</feature>
<feature type="transmembrane region" description="Helical" evidence="1">
    <location>
        <begin position="290"/>
        <end position="310"/>
    </location>
</feature>
<feature type="transmembrane region" description="Helical" evidence="1">
    <location>
        <begin position="323"/>
        <end position="343"/>
    </location>
</feature>